<keyword id="KW-0456">Lyase</keyword>
<keyword id="KW-0704">Schiff base</keyword>
<gene>
    <name evidence="1" type="primary">mfnB</name>
    <name type="ordered locus">MmarC5_0868</name>
</gene>
<sequence length="236" mass="25216">MILLVSPKDVAEAYEAIEGGADIIDVKNPPEGSLGANFPWVIKEIREATPEGRLVSAAIGDVPYKPGTVTLAALGATVSGADYIKVGLYGTRSYQEAVDVMKNVTKAVKYVGEDKIVVAAGYADAYRIGGVDPLVIPKVARDAGCDVAMLDTAVKDGKTLFDHMSIELLKEFVEETHKYGMKCALAGSIKIEEIPMLKEIGCDIVGVRGAACTKGDRNEGRIQKDLVKEIVKVCKE</sequence>
<dbReference type="EC" id="4.2.3.153" evidence="1"/>
<dbReference type="EMBL" id="CP000609">
    <property type="protein sequence ID" value="ABO35176.1"/>
    <property type="molecule type" value="Genomic_DNA"/>
</dbReference>
<dbReference type="RefSeq" id="WP_011868630.1">
    <property type="nucleotide sequence ID" value="NC_009135.1"/>
</dbReference>
<dbReference type="SMR" id="A4FY92"/>
<dbReference type="STRING" id="402880.MmarC5_0868"/>
<dbReference type="GeneID" id="4928127"/>
<dbReference type="KEGG" id="mmq:MmarC5_0868"/>
<dbReference type="eggNOG" id="arCOG04482">
    <property type="taxonomic scope" value="Archaea"/>
</dbReference>
<dbReference type="HOGENOM" id="CLU_068659_0_0_2"/>
<dbReference type="OrthoDB" id="81473at2157"/>
<dbReference type="UniPathway" id="UPA00080"/>
<dbReference type="Proteomes" id="UP000000253">
    <property type="component" value="Chromosome"/>
</dbReference>
<dbReference type="GO" id="GO:0016830">
    <property type="term" value="F:carbon-carbon lyase activity"/>
    <property type="evidence" value="ECO:0007669"/>
    <property type="project" value="UniProtKB-UniRule"/>
</dbReference>
<dbReference type="GO" id="GO:2001120">
    <property type="term" value="P:methanofuran biosynthetic process"/>
    <property type="evidence" value="ECO:0007669"/>
    <property type="project" value="UniProtKB-UniRule"/>
</dbReference>
<dbReference type="HAMAP" id="MF_00681">
    <property type="entry name" value="MfnB"/>
    <property type="match status" value="1"/>
</dbReference>
<dbReference type="InterPro" id="IPR007565">
    <property type="entry name" value="4HFCP_synth"/>
</dbReference>
<dbReference type="InterPro" id="IPR035081">
    <property type="entry name" value="4HFCP_synth_arc"/>
</dbReference>
<dbReference type="InterPro" id="IPR011060">
    <property type="entry name" value="RibuloseP-bd_barrel"/>
</dbReference>
<dbReference type="NCBIfam" id="NF002573">
    <property type="entry name" value="PRK02227.1-1"/>
    <property type="match status" value="1"/>
</dbReference>
<dbReference type="NCBIfam" id="NF002575">
    <property type="entry name" value="PRK02227.1-3"/>
    <property type="match status" value="1"/>
</dbReference>
<dbReference type="Pfam" id="PF04476">
    <property type="entry name" value="4HFCP_synth"/>
    <property type="match status" value="1"/>
</dbReference>
<dbReference type="PIRSF" id="PIRSF015957">
    <property type="entry name" value="UCP015957"/>
    <property type="match status" value="1"/>
</dbReference>
<dbReference type="SUPFAM" id="SSF51569">
    <property type="entry name" value="Aldolase"/>
    <property type="match status" value="1"/>
</dbReference>
<dbReference type="SUPFAM" id="SSF51366">
    <property type="entry name" value="Ribulose-phoshate binding barrel"/>
    <property type="match status" value="1"/>
</dbReference>
<reference key="1">
    <citation type="submission" date="2007-03" db="EMBL/GenBank/DDBJ databases">
        <title>Complete sequence of chromosome of Methanococcus maripaludis C5.</title>
        <authorList>
            <consortium name="US DOE Joint Genome Institute"/>
            <person name="Copeland A."/>
            <person name="Lucas S."/>
            <person name="Lapidus A."/>
            <person name="Barry K."/>
            <person name="Glavina del Rio T."/>
            <person name="Dalin E."/>
            <person name="Tice H."/>
            <person name="Pitluck S."/>
            <person name="Chertkov O."/>
            <person name="Brettin T."/>
            <person name="Bruce D."/>
            <person name="Han C."/>
            <person name="Detter J.C."/>
            <person name="Schmutz J."/>
            <person name="Larimer F."/>
            <person name="Land M."/>
            <person name="Hauser L."/>
            <person name="Kyrpides N."/>
            <person name="Mikhailova N."/>
            <person name="Sieprawska-Lupa M."/>
            <person name="Whitman W.B."/>
            <person name="Richardson P."/>
        </authorList>
    </citation>
    <scope>NUCLEOTIDE SEQUENCE [LARGE SCALE GENOMIC DNA]</scope>
    <source>
        <strain>C5 / ATCC BAA-1333</strain>
    </source>
</reference>
<name>MFNB_METM5</name>
<organism>
    <name type="scientific">Methanococcus maripaludis (strain C5 / ATCC BAA-1333)</name>
    <dbReference type="NCBI Taxonomy" id="402880"/>
    <lineage>
        <taxon>Archaea</taxon>
        <taxon>Methanobacteriati</taxon>
        <taxon>Methanobacteriota</taxon>
        <taxon>Methanomada group</taxon>
        <taxon>Methanococci</taxon>
        <taxon>Methanococcales</taxon>
        <taxon>Methanococcaceae</taxon>
        <taxon>Methanococcus</taxon>
    </lineage>
</organism>
<protein>
    <recommendedName>
        <fullName evidence="1">(5-formylfuran-3-yl)methyl phosphate synthase</fullName>
        <ecNumber evidence="1">4.2.3.153</ecNumber>
    </recommendedName>
    <alternativeName>
        <fullName evidence="1">4-(hydroxymethyl)-2-furancarboxaldehyde-phosphate synthase</fullName>
        <shortName evidence="1">4-HFC-P synthase</shortName>
    </alternativeName>
</protein>
<evidence type="ECO:0000255" key="1">
    <source>
        <dbReference type="HAMAP-Rule" id="MF_00681"/>
    </source>
</evidence>
<accession>A4FY92</accession>
<feature type="chain" id="PRO_1000044920" description="(5-formylfuran-3-yl)methyl phosphate synthase">
    <location>
        <begin position="1"/>
        <end position="236"/>
    </location>
</feature>
<feature type="active site" description="Schiff-base intermediate with substrate" evidence="1">
    <location>
        <position position="27"/>
    </location>
</feature>
<feature type="active site" description="Proton acceptor" evidence="1">
    <location>
        <position position="85"/>
    </location>
</feature>
<proteinExistence type="inferred from homology"/>
<comment type="function">
    <text evidence="1">Catalyzes the formation of 4-(hydroxymethyl)-2-furancarboxaldehyde phosphate (4-HFC-P) from two molecules of glyceraldehyde-3-P (GA-3-P).</text>
</comment>
<comment type="catalytic activity">
    <reaction evidence="1">
        <text>2 D-glyceraldehyde 3-phosphate = 4-(hydroxymethyl)-2-furancarboxaldehyde phosphate + phosphate + 2 H2O</text>
        <dbReference type="Rhea" id="RHEA:43536"/>
        <dbReference type="ChEBI" id="CHEBI:15377"/>
        <dbReference type="ChEBI" id="CHEBI:43474"/>
        <dbReference type="ChEBI" id="CHEBI:59776"/>
        <dbReference type="ChEBI" id="CHEBI:83407"/>
        <dbReference type="EC" id="4.2.3.153"/>
    </reaction>
</comment>
<comment type="pathway">
    <text evidence="1">Cofactor biosynthesis; methanofuran biosynthesis.</text>
</comment>
<comment type="similarity">
    <text evidence="1">Belongs to the MfnB family.</text>
</comment>